<feature type="chain" id="PRO_0000241419" description="Large ribosomal subunit protein uL3">
    <location>
        <begin position="1"/>
        <end position="208"/>
    </location>
</feature>
<feature type="region of interest" description="Disordered" evidence="2">
    <location>
        <begin position="123"/>
        <end position="146"/>
    </location>
</feature>
<evidence type="ECO:0000255" key="1">
    <source>
        <dbReference type="HAMAP-Rule" id="MF_01325"/>
    </source>
</evidence>
<evidence type="ECO:0000256" key="2">
    <source>
        <dbReference type="SAM" id="MobiDB-lite"/>
    </source>
</evidence>
<evidence type="ECO:0000305" key="3"/>
<accession>Q5LXR1</accession>
<organism>
    <name type="scientific">Streptococcus thermophilus (strain CNRZ 1066)</name>
    <dbReference type="NCBI Taxonomy" id="299768"/>
    <lineage>
        <taxon>Bacteria</taxon>
        <taxon>Bacillati</taxon>
        <taxon>Bacillota</taxon>
        <taxon>Bacilli</taxon>
        <taxon>Lactobacillales</taxon>
        <taxon>Streptococcaceae</taxon>
        <taxon>Streptococcus</taxon>
    </lineage>
</organism>
<keyword id="KW-0687">Ribonucleoprotein</keyword>
<keyword id="KW-0689">Ribosomal protein</keyword>
<keyword id="KW-0694">RNA-binding</keyword>
<keyword id="KW-0699">rRNA-binding</keyword>
<gene>
    <name evidence="1" type="primary">rplC</name>
    <name type="ordered locus">str1934</name>
</gene>
<dbReference type="EMBL" id="CP000024">
    <property type="protein sequence ID" value="AAV63447.1"/>
    <property type="molecule type" value="Genomic_DNA"/>
</dbReference>
<dbReference type="RefSeq" id="WP_002952166.1">
    <property type="nucleotide sequence ID" value="NC_006449.1"/>
</dbReference>
<dbReference type="SMR" id="Q5LXR1"/>
<dbReference type="GeneID" id="66899662"/>
<dbReference type="KEGG" id="stc:str1934"/>
<dbReference type="HOGENOM" id="CLU_044142_4_1_9"/>
<dbReference type="GO" id="GO:0022625">
    <property type="term" value="C:cytosolic large ribosomal subunit"/>
    <property type="evidence" value="ECO:0007669"/>
    <property type="project" value="TreeGrafter"/>
</dbReference>
<dbReference type="GO" id="GO:0019843">
    <property type="term" value="F:rRNA binding"/>
    <property type="evidence" value="ECO:0007669"/>
    <property type="project" value="UniProtKB-UniRule"/>
</dbReference>
<dbReference type="GO" id="GO:0003735">
    <property type="term" value="F:structural constituent of ribosome"/>
    <property type="evidence" value="ECO:0007669"/>
    <property type="project" value="InterPro"/>
</dbReference>
<dbReference type="GO" id="GO:0006412">
    <property type="term" value="P:translation"/>
    <property type="evidence" value="ECO:0007669"/>
    <property type="project" value="UniProtKB-UniRule"/>
</dbReference>
<dbReference type="FunFam" id="2.40.30.10:FF:000004">
    <property type="entry name" value="50S ribosomal protein L3"/>
    <property type="match status" value="1"/>
</dbReference>
<dbReference type="FunFam" id="3.30.160.810:FF:000002">
    <property type="entry name" value="50S ribosomal protein L3"/>
    <property type="match status" value="1"/>
</dbReference>
<dbReference type="Gene3D" id="3.30.160.810">
    <property type="match status" value="1"/>
</dbReference>
<dbReference type="Gene3D" id="2.40.30.10">
    <property type="entry name" value="Translation factors"/>
    <property type="match status" value="1"/>
</dbReference>
<dbReference type="HAMAP" id="MF_01325_B">
    <property type="entry name" value="Ribosomal_uL3_B"/>
    <property type="match status" value="1"/>
</dbReference>
<dbReference type="InterPro" id="IPR000597">
    <property type="entry name" value="Ribosomal_uL3"/>
</dbReference>
<dbReference type="InterPro" id="IPR019927">
    <property type="entry name" value="Ribosomal_uL3_bac/org-type"/>
</dbReference>
<dbReference type="InterPro" id="IPR019926">
    <property type="entry name" value="Ribosomal_uL3_CS"/>
</dbReference>
<dbReference type="InterPro" id="IPR009000">
    <property type="entry name" value="Transl_B-barrel_sf"/>
</dbReference>
<dbReference type="NCBIfam" id="TIGR03625">
    <property type="entry name" value="L3_bact"/>
    <property type="match status" value="1"/>
</dbReference>
<dbReference type="PANTHER" id="PTHR11229">
    <property type="entry name" value="50S RIBOSOMAL PROTEIN L3"/>
    <property type="match status" value="1"/>
</dbReference>
<dbReference type="PANTHER" id="PTHR11229:SF16">
    <property type="entry name" value="LARGE RIBOSOMAL SUBUNIT PROTEIN UL3C"/>
    <property type="match status" value="1"/>
</dbReference>
<dbReference type="Pfam" id="PF00297">
    <property type="entry name" value="Ribosomal_L3"/>
    <property type="match status" value="1"/>
</dbReference>
<dbReference type="SUPFAM" id="SSF50447">
    <property type="entry name" value="Translation proteins"/>
    <property type="match status" value="1"/>
</dbReference>
<dbReference type="PROSITE" id="PS00474">
    <property type="entry name" value="RIBOSOMAL_L3"/>
    <property type="match status" value="1"/>
</dbReference>
<reference key="1">
    <citation type="journal article" date="2004" name="Nat. Biotechnol.">
        <title>Complete sequence and comparative genome analysis of the dairy bacterium Streptococcus thermophilus.</title>
        <authorList>
            <person name="Bolotin A."/>
            <person name="Quinquis B."/>
            <person name="Renault P."/>
            <person name="Sorokin A."/>
            <person name="Ehrlich S.D."/>
            <person name="Kulakauskas S."/>
            <person name="Lapidus A."/>
            <person name="Goltsman E."/>
            <person name="Mazur M."/>
            <person name="Pusch G.D."/>
            <person name="Fonstein M."/>
            <person name="Overbeek R."/>
            <person name="Kyprides N."/>
            <person name="Purnelle B."/>
            <person name="Prozzi D."/>
            <person name="Ngui K."/>
            <person name="Masuy D."/>
            <person name="Hancy F."/>
            <person name="Burteau S."/>
            <person name="Boutry M."/>
            <person name="Delcour J."/>
            <person name="Goffeau A."/>
            <person name="Hols P."/>
        </authorList>
    </citation>
    <scope>NUCLEOTIDE SEQUENCE [LARGE SCALE GENOMIC DNA]</scope>
    <source>
        <strain>CNRZ 1066</strain>
    </source>
</reference>
<sequence>MTKGILGKKVGMTQIFTEAGEFIPVTVIEATPNVVLQVKTVETDGYEAVQVGFDDKREVLSNKPAKGHVAKANTAPKRFIREFKNIEGLEVGSEITVDIFEAGDVVDVTGTSKGKGFQGVIKRHGQSRGPMAHGSRYHRRPGSMGPVAPNRVFKNKHLAGRMGGNRVTIQNLEIVQVIPEKNVILIKGNVPGAKKSLITIKSAVKAAK</sequence>
<proteinExistence type="inferred from homology"/>
<name>RL3_STRT1</name>
<protein>
    <recommendedName>
        <fullName evidence="1">Large ribosomal subunit protein uL3</fullName>
    </recommendedName>
    <alternativeName>
        <fullName evidence="3">50S ribosomal protein L3</fullName>
    </alternativeName>
</protein>
<comment type="function">
    <text evidence="1">One of the primary rRNA binding proteins, it binds directly near the 3'-end of the 23S rRNA, where it nucleates assembly of the 50S subunit.</text>
</comment>
<comment type="subunit">
    <text evidence="1">Part of the 50S ribosomal subunit. Forms a cluster with proteins L14 and L19.</text>
</comment>
<comment type="similarity">
    <text evidence="1">Belongs to the universal ribosomal protein uL3 family.</text>
</comment>